<dbReference type="EMBL" id="CP000036">
    <property type="protein sequence ID" value="ABB65822.1"/>
    <property type="molecule type" value="Genomic_DNA"/>
</dbReference>
<dbReference type="RefSeq" id="WP_000907252.1">
    <property type="nucleotide sequence ID" value="NC_007613.1"/>
</dbReference>
<dbReference type="SMR" id="Q322D6"/>
<dbReference type="KEGG" id="sbo:SBO_1187"/>
<dbReference type="HOGENOM" id="CLU_062974_2_2_6"/>
<dbReference type="Proteomes" id="UP000007067">
    <property type="component" value="Chromosome"/>
</dbReference>
<dbReference type="GO" id="GO:0005829">
    <property type="term" value="C:cytosol"/>
    <property type="evidence" value="ECO:0007669"/>
    <property type="project" value="TreeGrafter"/>
</dbReference>
<dbReference type="GO" id="GO:0003677">
    <property type="term" value="F:DNA binding"/>
    <property type="evidence" value="ECO:0007669"/>
    <property type="project" value="UniProtKB-UniRule"/>
</dbReference>
<dbReference type="GO" id="GO:0006355">
    <property type="term" value="P:regulation of DNA-templated transcription"/>
    <property type="evidence" value="ECO:0007669"/>
    <property type="project" value="UniProtKB-UniRule"/>
</dbReference>
<dbReference type="FunFam" id="1.10.10.200:FF:000001">
    <property type="entry name" value="Probable transcriptional regulatory protein YebC"/>
    <property type="match status" value="1"/>
</dbReference>
<dbReference type="FunFam" id="3.30.70.980:FF:000002">
    <property type="entry name" value="Probable transcriptional regulatory protein YebC"/>
    <property type="match status" value="1"/>
</dbReference>
<dbReference type="Gene3D" id="1.10.10.200">
    <property type="match status" value="1"/>
</dbReference>
<dbReference type="Gene3D" id="3.30.70.980">
    <property type="match status" value="2"/>
</dbReference>
<dbReference type="HAMAP" id="MF_00693">
    <property type="entry name" value="Transcrip_reg_TACO1"/>
    <property type="match status" value="1"/>
</dbReference>
<dbReference type="InterPro" id="IPR017856">
    <property type="entry name" value="Integrase-like_N"/>
</dbReference>
<dbReference type="InterPro" id="IPR048300">
    <property type="entry name" value="TACO1_YebC-like_2nd/3rd_dom"/>
</dbReference>
<dbReference type="InterPro" id="IPR049083">
    <property type="entry name" value="TACO1_YebC_N"/>
</dbReference>
<dbReference type="InterPro" id="IPR002876">
    <property type="entry name" value="Transcrip_reg_TACO1-like"/>
</dbReference>
<dbReference type="InterPro" id="IPR026564">
    <property type="entry name" value="Transcrip_reg_TACO1-like_dom3"/>
</dbReference>
<dbReference type="InterPro" id="IPR029072">
    <property type="entry name" value="YebC-like"/>
</dbReference>
<dbReference type="NCBIfam" id="NF001030">
    <property type="entry name" value="PRK00110.1"/>
    <property type="match status" value="1"/>
</dbReference>
<dbReference type="NCBIfam" id="NF009044">
    <property type="entry name" value="PRK12378.1"/>
    <property type="match status" value="1"/>
</dbReference>
<dbReference type="NCBIfam" id="TIGR01033">
    <property type="entry name" value="YebC/PmpR family DNA-binding transcriptional regulator"/>
    <property type="match status" value="1"/>
</dbReference>
<dbReference type="PANTHER" id="PTHR12532:SF6">
    <property type="entry name" value="TRANSCRIPTIONAL REGULATORY PROTEIN YEBC-RELATED"/>
    <property type="match status" value="1"/>
</dbReference>
<dbReference type="PANTHER" id="PTHR12532">
    <property type="entry name" value="TRANSLATIONAL ACTIVATOR OF CYTOCHROME C OXIDASE 1"/>
    <property type="match status" value="1"/>
</dbReference>
<dbReference type="Pfam" id="PF20772">
    <property type="entry name" value="TACO1_YebC_N"/>
    <property type="match status" value="1"/>
</dbReference>
<dbReference type="Pfam" id="PF01709">
    <property type="entry name" value="Transcrip_reg"/>
    <property type="match status" value="1"/>
</dbReference>
<dbReference type="SUPFAM" id="SSF75625">
    <property type="entry name" value="YebC-like"/>
    <property type="match status" value="1"/>
</dbReference>
<organism>
    <name type="scientific">Shigella boydii serotype 4 (strain Sb227)</name>
    <dbReference type="NCBI Taxonomy" id="300268"/>
    <lineage>
        <taxon>Bacteria</taxon>
        <taxon>Pseudomonadati</taxon>
        <taxon>Pseudomonadota</taxon>
        <taxon>Gammaproteobacteria</taxon>
        <taxon>Enterobacterales</taxon>
        <taxon>Enterobacteriaceae</taxon>
        <taxon>Shigella</taxon>
    </lineage>
</organism>
<feature type="chain" id="PRO_0000257128" description="Probable transcriptional regulatory protein YebC">
    <location>
        <begin position="1"/>
        <end position="246"/>
    </location>
</feature>
<feature type="region of interest" description="Disordered" evidence="2">
    <location>
        <begin position="1"/>
        <end position="20"/>
    </location>
</feature>
<keyword id="KW-0963">Cytoplasm</keyword>
<keyword id="KW-0238">DNA-binding</keyword>
<keyword id="KW-0804">Transcription</keyword>
<keyword id="KW-0805">Transcription regulation</keyword>
<accession>Q322D6</accession>
<gene>
    <name evidence="1" type="primary">yebC</name>
    <name type="ordered locus">SBO_1187</name>
</gene>
<proteinExistence type="inferred from homology"/>
<comment type="subcellular location">
    <subcellularLocation>
        <location evidence="1">Cytoplasm</location>
    </subcellularLocation>
</comment>
<comment type="similarity">
    <text evidence="1">Belongs to the TACO1 family.</text>
</comment>
<sequence>MAGHSKWANTRHRKAAQDAKRGKIFTKIIRELVTAAKLGGGDPDANPRLRAAVDKALSNNMTRDTLNRAIARGVGGDDDANMETIIYEGYGPGGTAIMIECLSDNRNRTVAEVRHAFSKCGGNLGTDGSVAYLFSKKGVITFEKGDEDTIMEAALEAGAEDVVTYDDGAIDVYTAWEEMGKVRDALEAAGLKADSAEVSMIPSTKADMDAETAPKLMRLIDMLEDCDDVQEVYHNGEISDEIAATL</sequence>
<evidence type="ECO:0000255" key="1">
    <source>
        <dbReference type="HAMAP-Rule" id="MF_00693"/>
    </source>
</evidence>
<evidence type="ECO:0000256" key="2">
    <source>
        <dbReference type="SAM" id="MobiDB-lite"/>
    </source>
</evidence>
<name>YEBC_SHIBS</name>
<protein>
    <recommendedName>
        <fullName evidence="1">Probable transcriptional regulatory protein YebC</fullName>
    </recommendedName>
</protein>
<reference key="1">
    <citation type="journal article" date="2005" name="Nucleic Acids Res.">
        <title>Genome dynamics and diversity of Shigella species, the etiologic agents of bacillary dysentery.</title>
        <authorList>
            <person name="Yang F."/>
            <person name="Yang J."/>
            <person name="Zhang X."/>
            <person name="Chen L."/>
            <person name="Jiang Y."/>
            <person name="Yan Y."/>
            <person name="Tang X."/>
            <person name="Wang J."/>
            <person name="Xiong Z."/>
            <person name="Dong J."/>
            <person name="Xue Y."/>
            <person name="Zhu Y."/>
            <person name="Xu X."/>
            <person name="Sun L."/>
            <person name="Chen S."/>
            <person name="Nie H."/>
            <person name="Peng J."/>
            <person name="Xu J."/>
            <person name="Wang Y."/>
            <person name="Yuan Z."/>
            <person name="Wen Y."/>
            <person name="Yao Z."/>
            <person name="Shen Y."/>
            <person name="Qiang B."/>
            <person name="Hou Y."/>
            <person name="Yu J."/>
            <person name="Jin Q."/>
        </authorList>
    </citation>
    <scope>NUCLEOTIDE SEQUENCE [LARGE SCALE GENOMIC DNA]</scope>
    <source>
        <strain>Sb227</strain>
    </source>
</reference>